<gene>
    <name evidence="1" type="primary">psbT</name>
</gene>
<protein>
    <recommendedName>
        <fullName evidence="1">Photosystem II reaction center protein T</fullName>
        <shortName evidence="1">PSII-T</shortName>
    </recommendedName>
</protein>
<comment type="function">
    <text evidence="1">Found at the monomer-monomer interface of the photosystem II (PS II) dimer, plays a role in assembly and dimerization of PSII. PSII is a light-driven water plastoquinone oxidoreductase, using light energy to abstract electrons from H(2)O, generating a proton gradient subsequently used for ATP formation.</text>
</comment>
<comment type="subunit">
    <text evidence="1">PSII is composed of 1 copy each of membrane proteins PsbA, PsbB, PsbC, PsbD, PsbE, PsbF, PsbH, PsbI, PsbJ, PsbK, PsbL, PsbM, PsbT, PsbX, PsbY, PsbZ, Psb30/Ycf12, at least 3 peripheral proteins of the oxygen-evolving complex and a large number of cofactors. It forms dimeric complexes.</text>
</comment>
<comment type="subcellular location">
    <subcellularLocation>
        <location evidence="1">Plastid</location>
        <location evidence="1">Chloroplast thylakoid membrane</location>
        <topology evidence="1">Single-pass membrane protein</topology>
    </subcellularLocation>
</comment>
<comment type="similarity">
    <text evidence="1">Belongs to the PsbT family.</text>
</comment>
<reference key="1">
    <citation type="journal article" date="2005" name="DNA Res.">
        <title>The complete plastid genome sequence of the haptophyte Emiliania huxleyi: a comparison to other plastid genomes.</title>
        <authorList>
            <person name="Sanchez-Puerta M.V."/>
            <person name="Bachvaroff T.R."/>
            <person name="Delwiche C.F."/>
        </authorList>
    </citation>
    <scope>NUCLEOTIDE SEQUENCE [LARGE SCALE GENOMIC DNA]</scope>
    <source>
        <strain>CCMP373 / CSIRO-CS-57 / BT6</strain>
    </source>
</reference>
<accession>Q4G3C4</accession>
<organism>
    <name type="scientific">Emiliania huxleyi</name>
    <name type="common">Coccolithophore</name>
    <name type="synonym">Pontosphaera huxleyi</name>
    <dbReference type="NCBI Taxonomy" id="2903"/>
    <lineage>
        <taxon>Eukaryota</taxon>
        <taxon>Haptista</taxon>
        <taxon>Haptophyta</taxon>
        <taxon>Prymnesiophyceae</taxon>
        <taxon>Isochrysidales</taxon>
        <taxon>Noelaerhabdaceae</taxon>
        <taxon>Emiliania</taxon>
    </lineage>
</organism>
<feature type="chain" id="PRO_0000276320" description="Photosystem II reaction center protein T">
    <location>
        <begin position="1"/>
        <end position="32"/>
    </location>
</feature>
<feature type="transmembrane region" description="Helical" evidence="1">
    <location>
        <begin position="3"/>
        <end position="23"/>
    </location>
</feature>
<proteinExistence type="inferred from homology"/>
<sequence>MEALVYTFLLIGTLVVIFFAIFFRDPPRIVKK</sequence>
<name>PSBT_EMIHU</name>
<dbReference type="EMBL" id="AY741371">
    <property type="protein sequence ID" value="AAX13842.1"/>
    <property type="molecule type" value="Genomic_DNA"/>
</dbReference>
<dbReference type="RefSeq" id="YP_277343.1">
    <property type="nucleotide sequence ID" value="NC_007288.1"/>
</dbReference>
<dbReference type="SMR" id="Q4G3C4"/>
<dbReference type="STRING" id="2903.Q4G3C4"/>
<dbReference type="GeneID" id="3562521"/>
<dbReference type="GO" id="GO:0009535">
    <property type="term" value="C:chloroplast thylakoid membrane"/>
    <property type="evidence" value="ECO:0007669"/>
    <property type="project" value="UniProtKB-SubCell"/>
</dbReference>
<dbReference type="GO" id="GO:0009539">
    <property type="term" value="C:photosystem II reaction center"/>
    <property type="evidence" value="ECO:0007669"/>
    <property type="project" value="InterPro"/>
</dbReference>
<dbReference type="GO" id="GO:0015979">
    <property type="term" value="P:photosynthesis"/>
    <property type="evidence" value="ECO:0007669"/>
    <property type="project" value="UniProtKB-UniRule"/>
</dbReference>
<dbReference type="HAMAP" id="MF_00808">
    <property type="entry name" value="PSII_PsbT"/>
    <property type="match status" value="1"/>
</dbReference>
<dbReference type="InterPro" id="IPR001743">
    <property type="entry name" value="PSII_PsbT"/>
</dbReference>
<dbReference type="InterPro" id="IPR037268">
    <property type="entry name" value="PSII_PsbT_sf"/>
</dbReference>
<dbReference type="PANTHER" id="PTHR36411">
    <property type="match status" value="1"/>
</dbReference>
<dbReference type="PANTHER" id="PTHR36411:SF2">
    <property type="entry name" value="PHOTOSYSTEM II REACTION CENTER PROTEIN T"/>
    <property type="match status" value="1"/>
</dbReference>
<dbReference type="Pfam" id="PF01405">
    <property type="entry name" value="PsbT"/>
    <property type="match status" value="1"/>
</dbReference>
<dbReference type="SUPFAM" id="SSF161029">
    <property type="entry name" value="Photosystem II reaction center protein T, PsbT"/>
    <property type="match status" value="1"/>
</dbReference>
<keyword id="KW-0150">Chloroplast</keyword>
<keyword id="KW-0472">Membrane</keyword>
<keyword id="KW-0602">Photosynthesis</keyword>
<keyword id="KW-0604">Photosystem II</keyword>
<keyword id="KW-0934">Plastid</keyword>
<keyword id="KW-0793">Thylakoid</keyword>
<keyword id="KW-0812">Transmembrane</keyword>
<keyword id="KW-1133">Transmembrane helix</keyword>
<evidence type="ECO:0000255" key="1">
    <source>
        <dbReference type="HAMAP-Rule" id="MF_00808"/>
    </source>
</evidence>
<geneLocation type="chloroplast"/>